<sequence length="269" mass="29742">MQPQIILITGASSGFGKITAQMLSEQGHIVYGTSRKPSENIGKVRMLVVDVTNSISVRQAVEQIISEQGRMDVLINNAGMGIGGALELATEEEVSMQMNTNFFGVVNMCKAVLPYMRKARRGKIINISSIGGVMGIPYQGFYSASKFAVEGYSEALALEVHPFHIKVCLVQPGDFNTGFTDNRNISELTGQNEDYADSFLRSLKIIEKEERNGCHPRKLGAAICKIVARKNPPFRTKVGPLVQVLFAKSKSWLPDNMMQYALRIFYAIR</sequence>
<proteinExistence type="evidence at protein level"/>
<protein>
    <recommendedName>
        <fullName evidence="9">3-ketodihydrosphingosine reductase</fullName>
        <shortName evidence="9">3-KDSR</shortName>
        <ecNumber evidence="8">1.1.1.102</ecNumber>
    </recommendedName>
    <alternativeName>
        <fullName evidence="3">KDS reductase</fullName>
    </alternativeName>
</protein>
<reference evidence="12" key="1">
    <citation type="journal article" date="2003" name="Science">
        <title>A genomic view of the human-Bacteroides thetaiotaomicron symbiosis.</title>
        <authorList>
            <person name="Xu J."/>
            <person name="Bjursell M.K."/>
            <person name="Himrod J."/>
            <person name="Deng S."/>
            <person name="Carmichael L.K."/>
            <person name="Chiang H.C."/>
            <person name="Hooper L.V."/>
            <person name="Gordon J.I."/>
        </authorList>
    </citation>
    <scope>NUCLEOTIDE SEQUENCE [LARGE SCALE GENOMIC DNA]</scope>
    <source>
        <strain evidence="12">ATCC 29148 / DSM 2079 / JCM 5827 / CCUG 10774 / NCTC 10582 / VPI-5482 / E50</strain>
    </source>
</reference>
<reference evidence="12" key="2">
    <citation type="journal article" date="2009" name="Proc. Natl. Acad. Sci. U.S.A.">
        <title>Characterizing a model human gut microbiota composed of members of its two dominant bacterial phyla.</title>
        <authorList>
            <person name="Mahowald M.A."/>
            <person name="Rey F.E."/>
            <person name="Seedorf H."/>
            <person name="Turnbaugh P.J."/>
            <person name="Fulton R.S."/>
            <person name="Wollam A."/>
            <person name="Shah N."/>
            <person name="Wang C."/>
            <person name="Magrini V."/>
            <person name="Wilson R.K."/>
            <person name="Cantarel B.L."/>
            <person name="Coutinho P.M."/>
            <person name="Henrissat B."/>
            <person name="Crock L.W."/>
            <person name="Russell A."/>
            <person name="Verberkmoes N.C."/>
            <person name="Hettich R.L."/>
            <person name="Gordon J.I."/>
        </authorList>
    </citation>
    <scope>NUCLEOTIDE SEQUENCE [LARGE SCALE GENOMIC DNA]</scope>
    <source>
        <strain evidence="12">ATCC 29148 / DSM 2079 / JCM 5827 / CCUG 10774 / NCTC 10582 / VPI-5482 / E50</strain>
    </source>
</reference>
<reference evidence="10" key="3">
    <citation type="journal article" date="2022" name="J. Lipid Res.">
        <title>Identification and characterization of 3-ketosphinganine reductase activity encoded at the BT_0972 locus in Bacteroides thetaiotaomicron.</title>
        <authorList>
            <person name="Lee M.T."/>
            <person name="Le H."/>
            <person name="Besler K."/>
            <person name="Johnson E."/>
        </authorList>
    </citation>
    <scope>FUNCTION</scope>
    <scope>CATALYTIC ACTIVITY</scope>
    <source>
        <strain evidence="9">ATCC 29148 / DSM 2079 / JCM 5827 / CCUG 10774 / NCTC 10582 / VPI-5482 / E50</strain>
    </source>
</reference>
<gene>
    <name evidence="9" type="primary">kdsr</name>
    <name evidence="11" type="ordered locus">BT_0972</name>
</gene>
<evidence type="ECO:0000250" key="1">
    <source>
        <dbReference type="UniProtKB" id="O93868"/>
    </source>
</evidence>
<evidence type="ECO:0000250" key="2">
    <source>
        <dbReference type="UniProtKB" id="P0CR36"/>
    </source>
</evidence>
<evidence type="ECO:0000250" key="3">
    <source>
        <dbReference type="UniProtKB" id="P38342"/>
    </source>
</evidence>
<evidence type="ECO:0000250" key="4">
    <source>
        <dbReference type="UniProtKB" id="P40471"/>
    </source>
</evidence>
<evidence type="ECO:0000250" key="5">
    <source>
        <dbReference type="UniProtKB" id="Q06136"/>
    </source>
</evidence>
<evidence type="ECO:0000250" key="6">
    <source>
        <dbReference type="UniProtKB" id="Q92506"/>
    </source>
</evidence>
<evidence type="ECO:0000255" key="7">
    <source>
        <dbReference type="PROSITE-ProRule" id="PRU10001"/>
    </source>
</evidence>
<evidence type="ECO:0000269" key="8">
    <source>
    </source>
</evidence>
<evidence type="ECO:0000303" key="9">
    <source>
    </source>
</evidence>
<evidence type="ECO:0000305" key="10"/>
<evidence type="ECO:0000312" key="11">
    <source>
        <dbReference type="EMBL" id="AAO76079.1"/>
    </source>
</evidence>
<evidence type="ECO:0000312" key="12">
    <source>
        <dbReference type="Proteomes" id="UP000001414"/>
    </source>
</evidence>
<comment type="function">
    <text evidence="8">Catalyzes the reduction of 3'-oxosphinganine (3-ketodihydrosphingosine/KDS) to sphinganine (dihydrosphingosine/DHS), the second step of de novo sphingolipid biosynthesis.</text>
</comment>
<comment type="catalytic activity">
    <reaction evidence="8">
        <text>sphinganine + NADP(+) = 3-oxosphinganine + NADPH + H(+)</text>
        <dbReference type="Rhea" id="RHEA:22640"/>
        <dbReference type="ChEBI" id="CHEBI:15378"/>
        <dbReference type="ChEBI" id="CHEBI:57783"/>
        <dbReference type="ChEBI" id="CHEBI:57817"/>
        <dbReference type="ChEBI" id="CHEBI:58299"/>
        <dbReference type="ChEBI" id="CHEBI:58349"/>
        <dbReference type="EC" id="1.1.1.102"/>
    </reaction>
    <physiologicalReaction direction="right-to-left" evidence="8">
        <dbReference type="Rhea" id="RHEA:22642"/>
    </physiologicalReaction>
</comment>
<comment type="pathway">
    <text evidence="10">Lipid metabolism; sphingolipid metabolism.</text>
</comment>
<comment type="similarity">
    <text evidence="10">Belongs to the short-chain dehydrogenases/reductases (SDR) family.</text>
</comment>
<keyword id="KW-0443">Lipid metabolism</keyword>
<keyword id="KW-0521">NADP</keyword>
<keyword id="KW-0547">Nucleotide-binding</keyword>
<keyword id="KW-0560">Oxidoreductase</keyword>
<keyword id="KW-1185">Reference proteome</keyword>
<keyword id="KW-0746">Sphingolipid metabolism</keyword>
<organism evidence="12">
    <name type="scientific">Bacteroides thetaiotaomicron (strain ATCC 29148 / DSM 2079 / JCM 5827 / CCUG 10774 / NCTC 10582 / VPI-5482 / E50)</name>
    <dbReference type="NCBI Taxonomy" id="226186"/>
    <lineage>
        <taxon>Bacteria</taxon>
        <taxon>Pseudomonadati</taxon>
        <taxon>Bacteroidota</taxon>
        <taxon>Bacteroidia</taxon>
        <taxon>Bacteroidales</taxon>
        <taxon>Bacteroidaceae</taxon>
        <taxon>Bacteroides</taxon>
    </lineage>
</organism>
<name>KDSR_BACTN</name>
<dbReference type="EC" id="1.1.1.102" evidence="8"/>
<dbReference type="EMBL" id="AE015928">
    <property type="protein sequence ID" value="AAO76079.1"/>
    <property type="molecule type" value="Genomic_DNA"/>
</dbReference>
<dbReference type="RefSeq" id="NP_809885.1">
    <property type="nucleotide sequence ID" value="NC_004663.1"/>
</dbReference>
<dbReference type="RefSeq" id="WP_008765762.1">
    <property type="nucleotide sequence ID" value="NC_004663.1"/>
</dbReference>
<dbReference type="SMR" id="Q8A945"/>
<dbReference type="FunCoup" id="Q8A945">
    <property type="interactions" value="306"/>
</dbReference>
<dbReference type="STRING" id="226186.BT_0972"/>
<dbReference type="PaxDb" id="226186-BT_0972"/>
<dbReference type="EnsemblBacteria" id="AAO76079">
    <property type="protein sequence ID" value="AAO76079"/>
    <property type="gene ID" value="BT_0972"/>
</dbReference>
<dbReference type="GeneID" id="60926948"/>
<dbReference type="KEGG" id="bth:BT_0972"/>
<dbReference type="PATRIC" id="fig|226186.12.peg.988"/>
<dbReference type="eggNOG" id="COG4221">
    <property type="taxonomic scope" value="Bacteria"/>
</dbReference>
<dbReference type="HOGENOM" id="CLU_010194_2_9_10"/>
<dbReference type="InParanoid" id="Q8A945"/>
<dbReference type="OrthoDB" id="9786056at2"/>
<dbReference type="UniPathway" id="UPA00222"/>
<dbReference type="Proteomes" id="UP000001414">
    <property type="component" value="Chromosome"/>
</dbReference>
<dbReference type="GO" id="GO:0016020">
    <property type="term" value="C:membrane"/>
    <property type="evidence" value="ECO:0007669"/>
    <property type="project" value="GOC"/>
</dbReference>
<dbReference type="GO" id="GO:0047560">
    <property type="term" value="F:3-dehydrosphinganine reductase activity"/>
    <property type="evidence" value="ECO:0000314"/>
    <property type="project" value="UniProtKB"/>
</dbReference>
<dbReference type="GO" id="GO:0070402">
    <property type="term" value="F:NADPH binding"/>
    <property type="evidence" value="ECO:0000250"/>
    <property type="project" value="UniProtKB"/>
</dbReference>
<dbReference type="GO" id="GO:0006666">
    <property type="term" value="P:3-keto-sphinganine metabolic process"/>
    <property type="evidence" value="ECO:0000250"/>
    <property type="project" value="UniProtKB"/>
</dbReference>
<dbReference type="GO" id="GO:0030148">
    <property type="term" value="P:sphingolipid biosynthetic process"/>
    <property type="evidence" value="ECO:0000314"/>
    <property type="project" value="UniProtKB"/>
</dbReference>
<dbReference type="CDD" id="cd05374">
    <property type="entry name" value="17beta-HSD-like_SDR_c"/>
    <property type="match status" value="1"/>
</dbReference>
<dbReference type="Gene3D" id="3.40.50.720">
    <property type="entry name" value="NAD(P)-binding Rossmann-like Domain"/>
    <property type="match status" value="1"/>
</dbReference>
<dbReference type="InterPro" id="IPR036291">
    <property type="entry name" value="NAD(P)-bd_dom_sf"/>
</dbReference>
<dbReference type="InterPro" id="IPR020904">
    <property type="entry name" value="Sc_DH/Rdtase_CS"/>
</dbReference>
<dbReference type="InterPro" id="IPR002347">
    <property type="entry name" value="SDR_fam"/>
</dbReference>
<dbReference type="InterPro" id="IPR051911">
    <property type="entry name" value="SDR_oxidoreductase"/>
</dbReference>
<dbReference type="PANTHER" id="PTHR43976">
    <property type="entry name" value="SHORT CHAIN DEHYDROGENASE"/>
    <property type="match status" value="1"/>
</dbReference>
<dbReference type="PANTHER" id="PTHR43976:SF16">
    <property type="entry name" value="SHORT-CHAIN DEHYDROGENASE_REDUCTASE FAMILY PROTEIN"/>
    <property type="match status" value="1"/>
</dbReference>
<dbReference type="Pfam" id="PF00106">
    <property type="entry name" value="adh_short"/>
    <property type="match status" value="1"/>
</dbReference>
<dbReference type="PRINTS" id="PR00081">
    <property type="entry name" value="GDHRDH"/>
</dbReference>
<dbReference type="PRINTS" id="PR00080">
    <property type="entry name" value="SDRFAMILY"/>
</dbReference>
<dbReference type="SUPFAM" id="SSF51735">
    <property type="entry name" value="NAD(P)-binding Rossmann-fold domains"/>
    <property type="match status" value="1"/>
</dbReference>
<dbReference type="PROSITE" id="PS00061">
    <property type="entry name" value="ADH_SHORT"/>
    <property type="match status" value="1"/>
</dbReference>
<accession>Q8A945</accession>
<feature type="chain" id="PRO_0000456610" description="3-ketodihydrosphingosine reductase">
    <location>
        <begin position="1"/>
        <end position="269"/>
    </location>
</feature>
<feature type="short sequence motif" description="GXSXG" evidence="4">
    <location>
        <begin position="10"/>
        <end position="14"/>
    </location>
</feature>
<feature type="active site" description="Nucleophile; for lipase activity" evidence="4">
    <location>
        <position position="12"/>
    </location>
</feature>
<feature type="active site" description="Proton donor" evidence="1">
    <location>
        <position position="128"/>
    </location>
</feature>
<feature type="active site" description="Proton acceptor" evidence="7">
    <location>
        <position position="142"/>
    </location>
</feature>
<feature type="active site" evidence="5">
    <location>
        <position position="146"/>
    </location>
</feature>
<feature type="active site" description="Lowers pKa of active site Tyr" evidence="1">
    <location>
        <position position="146"/>
    </location>
</feature>
<feature type="binding site" evidence="2">
    <location>
        <position position="10"/>
    </location>
    <ligand>
        <name>NADPH</name>
        <dbReference type="ChEBI" id="CHEBI:57783"/>
    </ligand>
</feature>
<feature type="binding site" evidence="2">
    <location>
        <position position="12"/>
    </location>
    <ligand>
        <name>NADPH</name>
        <dbReference type="ChEBI" id="CHEBI:57783"/>
    </ligand>
</feature>
<feature type="binding site" evidence="2">
    <location>
        <position position="13"/>
    </location>
    <ligand>
        <name>NADPH</name>
        <dbReference type="ChEBI" id="CHEBI:57783"/>
    </ligand>
</feature>
<feature type="binding site" evidence="2">
    <location>
        <position position="14"/>
    </location>
    <ligand>
        <name>NADPH</name>
        <dbReference type="ChEBI" id="CHEBI:57783"/>
    </ligand>
</feature>
<feature type="binding site" evidence="2">
    <location>
        <position position="36"/>
    </location>
    <ligand>
        <name>NADPH</name>
        <dbReference type="ChEBI" id="CHEBI:57783"/>
    </ligand>
</feature>
<feature type="binding site" evidence="2">
    <location>
        <position position="50"/>
    </location>
    <ligand>
        <name>NADPH</name>
        <dbReference type="ChEBI" id="CHEBI:57783"/>
    </ligand>
</feature>
<feature type="binding site" evidence="6">
    <location>
        <begin position="142"/>
        <end position="146"/>
    </location>
    <ligand>
        <name>NADPH</name>
        <dbReference type="ChEBI" id="CHEBI:57783"/>
    </ligand>
</feature>
<feature type="binding site" evidence="1">
    <location>
        <position position="142"/>
    </location>
    <ligand>
        <name>NADP(+)</name>
        <dbReference type="ChEBI" id="CHEBI:58349"/>
    </ligand>
</feature>
<feature type="binding site" evidence="1">
    <location>
        <position position="146"/>
    </location>
    <ligand>
        <name>NADP(+)</name>
        <dbReference type="ChEBI" id="CHEBI:58349"/>
    </ligand>
</feature>
<feature type="binding site" evidence="6">
    <location>
        <begin position="175"/>
        <end position="177"/>
    </location>
    <ligand>
        <name>NADPH</name>
        <dbReference type="ChEBI" id="CHEBI:57783"/>
    </ligand>
</feature>